<name>PANB_LEPIN</name>
<keyword id="KW-0963">Cytoplasm</keyword>
<keyword id="KW-0460">Magnesium</keyword>
<keyword id="KW-0479">Metal-binding</keyword>
<keyword id="KW-0566">Pantothenate biosynthesis</keyword>
<keyword id="KW-1185">Reference proteome</keyword>
<keyword id="KW-0808">Transferase</keyword>
<comment type="function">
    <text evidence="1">Catalyzes the reversible reaction in which hydroxymethyl group from 5,10-methylenetetrahydrofolate is transferred onto alpha-ketoisovalerate to form ketopantoate.</text>
</comment>
<comment type="catalytic activity">
    <reaction evidence="1">
        <text>3-methyl-2-oxobutanoate + (6R)-5,10-methylene-5,6,7,8-tetrahydrofolate + H2O = 2-dehydropantoate + (6S)-5,6,7,8-tetrahydrofolate</text>
        <dbReference type="Rhea" id="RHEA:11824"/>
        <dbReference type="ChEBI" id="CHEBI:11561"/>
        <dbReference type="ChEBI" id="CHEBI:11851"/>
        <dbReference type="ChEBI" id="CHEBI:15377"/>
        <dbReference type="ChEBI" id="CHEBI:15636"/>
        <dbReference type="ChEBI" id="CHEBI:57453"/>
        <dbReference type="EC" id="2.1.2.11"/>
    </reaction>
</comment>
<comment type="cofactor">
    <cofactor evidence="1">
        <name>Mg(2+)</name>
        <dbReference type="ChEBI" id="CHEBI:18420"/>
    </cofactor>
    <text evidence="1">Binds 1 Mg(2+) ion per subunit.</text>
</comment>
<comment type="pathway">
    <text evidence="1">Cofactor biosynthesis; (R)-pantothenate biosynthesis; (R)-pantoate from 3-methyl-2-oxobutanoate: step 1/2.</text>
</comment>
<comment type="subunit">
    <text evidence="1">Homodecamer; pentamer of dimers.</text>
</comment>
<comment type="subcellular location">
    <subcellularLocation>
        <location evidence="1">Cytoplasm</location>
    </subcellularLocation>
</comment>
<comment type="similarity">
    <text evidence="1">Belongs to the PanB family.</text>
</comment>
<sequence length="265" mass="28913">MKNIHKIFSPEKKGKEKISVVTCYDFSFARILNETEIDSILVGDSLGMVFQGNTSTLPVTLEEMIYHTKAVRRGAPDKFLIADLPFLSYQTSIEEGIRSAGKIMKESDCDAVKIEGGSEFICELVSILKQIGVPVMGHLGLTPQSVHVFGGHRVQGKGEESSSKLLKESISLFESGVFSMVLEMIPAELGKKVSQEVGVPTIGIGAGSDCDGQVLVLNDLLGLDINFQPKFLKKFSNLHSIVKEAIADYDKEVKSGEFPGKDHSF</sequence>
<evidence type="ECO:0000255" key="1">
    <source>
        <dbReference type="HAMAP-Rule" id="MF_00156"/>
    </source>
</evidence>
<feature type="chain" id="PRO_0000184856" description="3-methyl-2-oxobutanoate hydroxymethyltransferase">
    <location>
        <begin position="1"/>
        <end position="265"/>
    </location>
</feature>
<feature type="active site" description="Proton acceptor" evidence="1">
    <location>
        <position position="183"/>
    </location>
</feature>
<feature type="binding site" evidence="1">
    <location>
        <begin position="44"/>
        <end position="45"/>
    </location>
    <ligand>
        <name>3-methyl-2-oxobutanoate</name>
        <dbReference type="ChEBI" id="CHEBI:11851"/>
    </ligand>
</feature>
<feature type="binding site" evidence="1">
    <location>
        <position position="44"/>
    </location>
    <ligand>
        <name>Mg(2+)</name>
        <dbReference type="ChEBI" id="CHEBI:18420"/>
    </ligand>
</feature>
<feature type="binding site" evidence="1">
    <location>
        <position position="83"/>
    </location>
    <ligand>
        <name>3-methyl-2-oxobutanoate</name>
        <dbReference type="ChEBI" id="CHEBI:11851"/>
    </ligand>
</feature>
<feature type="binding site" evidence="1">
    <location>
        <position position="83"/>
    </location>
    <ligand>
        <name>Mg(2+)</name>
        <dbReference type="ChEBI" id="CHEBI:18420"/>
    </ligand>
</feature>
<feature type="binding site" evidence="1">
    <location>
        <position position="113"/>
    </location>
    <ligand>
        <name>3-methyl-2-oxobutanoate</name>
        <dbReference type="ChEBI" id="CHEBI:11851"/>
    </ligand>
</feature>
<feature type="binding site" evidence="1">
    <location>
        <position position="115"/>
    </location>
    <ligand>
        <name>Mg(2+)</name>
        <dbReference type="ChEBI" id="CHEBI:18420"/>
    </ligand>
</feature>
<dbReference type="EC" id="2.1.2.11" evidence="1"/>
<dbReference type="EMBL" id="AE010300">
    <property type="protein sequence ID" value="AAN51156.1"/>
    <property type="molecule type" value="Genomic_DNA"/>
</dbReference>
<dbReference type="RefSeq" id="NP_714138.1">
    <property type="nucleotide sequence ID" value="NC_004342.2"/>
</dbReference>
<dbReference type="RefSeq" id="WP_000789319.1">
    <property type="nucleotide sequence ID" value="NC_004342.2"/>
</dbReference>
<dbReference type="SMR" id="Q8EZ98"/>
<dbReference type="FunCoup" id="Q8EZ98">
    <property type="interactions" value="408"/>
</dbReference>
<dbReference type="STRING" id="189518.LA_3958"/>
<dbReference type="PaxDb" id="189518-LA_3958"/>
<dbReference type="EnsemblBacteria" id="AAN51156">
    <property type="protein sequence ID" value="AAN51156"/>
    <property type="gene ID" value="LA_3958"/>
</dbReference>
<dbReference type="GeneID" id="61143030"/>
<dbReference type="KEGG" id="lil:LA_3958"/>
<dbReference type="PATRIC" id="fig|189518.3.peg.3928"/>
<dbReference type="HOGENOM" id="CLU_036645_1_0_12"/>
<dbReference type="InParanoid" id="Q8EZ98"/>
<dbReference type="OrthoDB" id="9781789at2"/>
<dbReference type="UniPathway" id="UPA00028">
    <property type="reaction ID" value="UER00003"/>
</dbReference>
<dbReference type="Proteomes" id="UP000001408">
    <property type="component" value="Chromosome I"/>
</dbReference>
<dbReference type="GO" id="GO:0005737">
    <property type="term" value="C:cytoplasm"/>
    <property type="evidence" value="ECO:0000318"/>
    <property type="project" value="GO_Central"/>
</dbReference>
<dbReference type="GO" id="GO:0003864">
    <property type="term" value="F:3-methyl-2-oxobutanoate hydroxymethyltransferase activity"/>
    <property type="evidence" value="ECO:0000318"/>
    <property type="project" value="GO_Central"/>
</dbReference>
<dbReference type="GO" id="GO:0000287">
    <property type="term" value="F:magnesium ion binding"/>
    <property type="evidence" value="ECO:0000318"/>
    <property type="project" value="GO_Central"/>
</dbReference>
<dbReference type="GO" id="GO:0015940">
    <property type="term" value="P:pantothenate biosynthetic process"/>
    <property type="evidence" value="ECO:0000318"/>
    <property type="project" value="GO_Central"/>
</dbReference>
<dbReference type="CDD" id="cd06557">
    <property type="entry name" value="KPHMT-like"/>
    <property type="match status" value="1"/>
</dbReference>
<dbReference type="FunFam" id="3.20.20.60:FF:000003">
    <property type="entry name" value="3-methyl-2-oxobutanoate hydroxymethyltransferase"/>
    <property type="match status" value="1"/>
</dbReference>
<dbReference type="Gene3D" id="3.20.20.60">
    <property type="entry name" value="Phosphoenolpyruvate-binding domains"/>
    <property type="match status" value="1"/>
</dbReference>
<dbReference type="HAMAP" id="MF_00156">
    <property type="entry name" value="PanB"/>
    <property type="match status" value="1"/>
</dbReference>
<dbReference type="InterPro" id="IPR003700">
    <property type="entry name" value="Pantoate_hydroxy_MeTrfase"/>
</dbReference>
<dbReference type="InterPro" id="IPR015813">
    <property type="entry name" value="Pyrv/PenolPyrv_kinase-like_dom"/>
</dbReference>
<dbReference type="InterPro" id="IPR040442">
    <property type="entry name" value="Pyrv_kinase-like_dom_sf"/>
</dbReference>
<dbReference type="NCBIfam" id="TIGR00222">
    <property type="entry name" value="panB"/>
    <property type="match status" value="1"/>
</dbReference>
<dbReference type="NCBIfam" id="NF001452">
    <property type="entry name" value="PRK00311.1"/>
    <property type="match status" value="1"/>
</dbReference>
<dbReference type="PANTHER" id="PTHR20881">
    <property type="entry name" value="3-METHYL-2-OXOBUTANOATE HYDROXYMETHYLTRANSFERASE"/>
    <property type="match status" value="1"/>
</dbReference>
<dbReference type="PANTHER" id="PTHR20881:SF0">
    <property type="entry name" value="3-METHYL-2-OXOBUTANOATE HYDROXYMETHYLTRANSFERASE"/>
    <property type="match status" value="1"/>
</dbReference>
<dbReference type="Pfam" id="PF02548">
    <property type="entry name" value="Pantoate_transf"/>
    <property type="match status" value="1"/>
</dbReference>
<dbReference type="PIRSF" id="PIRSF000388">
    <property type="entry name" value="Pantoate_hydroxy_MeTrfase"/>
    <property type="match status" value="1"/>
</dbReference>
<dbReference type="SUPFAM" id="SSF51621">
    <property type="entry name" value="Phosphoenolpyruvate/pyruvate domain"/>
    <property type="match status" value="1"/>
</dbReference>
<protein>
    <recommendedName>
        <fullName evidence="1">3-methyl-2-oxobutanoate hydroxymethyltransferase</fullName>
        <ecNumber evidence="1">2.1.2.11</ecNumber>
    </recommendedName>
    <alternativeName>
        <fullName evidence="1">Ketopantoate hydroxymethyltransferase</fullName>
        <shortName evidence="1">KPHMT</shortName>
    </alternativeName>
</protein>
<organism>
    <name type="scientific">Leptospira interrogans serogroup Icterohaemorrhagiae serovar Lai (strain 56601)</name>
    <dbReference type="NCBI Taxonomy" id="189518"/>
    <lineage>
        <taxon>Bacteria</taxon>
        <taxon>Pseudomonadati</taxon>
        <taxon>Spirochaetota</taxon>
        <taxon>Spirochaetia</taxon>
        <taxon>Leptospirales</taxon>
        <taxon>Leptospiraceae</taxon>
        <taxon>Leptospira</taxon>
    </lineage>
</organism>
<proteinExistence type="inferred from homology"/>
<gene>
    <name evidence="1" type="primary">panB</name>
    <name type="ordered locus">LA_3958</name>
</gene>
<reference key="1">
    <citation type="journal article" date="2003" name="Nature">
        <title>Unique physiological and pathogenic features of Leptospira interrogans revealed by whole-genome sequencing.</title>
        <authorList>
            <person name="Ren S.-X."/>
            <person name="Fu G."/>
            <person name="Jiang X.-G."/>
            <person name="Zeng R."/>
            <person name="Miao Y.-G."/>
            <person name="Xu H."/>
            <person name="Zhang Y.-X."/>
            <person name="Xiong H."/>
            <person name="Lu G."/>
            <person name="Lu L.-F."/>
            <person name="Jiang H.-Q."/>
            <person name="Jia J."/>
            <person name="Tu Y.-F."/>
            <person name="Jiang J.-X."/>
            <person name="Gu W.-Y."/>
            <person name="Zhang Y.-Q."/>
            <person name="Cai Z."/>
            <person name="Sheng H.-H."/>
            <person name="Yin H.-F."/>
            <person name="Zhang Y."/>
            <person name="Zhu G.-F."/>
            <person name="Wan M."/>
            <person name="Huang H.-L."/>
            <person name="Qian Z."/>
            <person name="Wang S.-Y."/>
            <person name="Ma W."/>
            <person name="Yao Z.-J."/>
            <person name="Shen Y."/>
            <person name="Qiang B.-Q."/>
            <person name="Xia Q.-C."/>
            <person name="Guo X.-K."/>
            <person name="Danchin A."/>
            <person name="Saint Girons I."/>
            <person name="Somerville R.L."/>
            <person name="Wen Y.-M."/>
            <person name="Shi M.-H."/>
            <person name="Chen Z."/>
            <person name="Xu J.-G."/>
            <person name="Zhao G.-P."/>
        </authorList>
    </citation>
    <scope>NUCLEOTIDE SEQUENCE [LARGE SCALE GENOMIC DNA]</scope>
    <source>
        <strain>56601</strain>
    </source>
</reference>
<accession>Q8EZ98</accession>